<name>YR752_MIMIV</name>
<dbReference type="EMBL" id="AY653733">
    <property type="protein sequence ID" value="AAV51012.1"/>
    <property type="molecule type" value="Genomic_DNA"/>
</dbReference>
<dbReference type="KEGG" id="vg:9925409"/>
<dbReference type="OrthoDB" id="24587at10239"/>
<dbReference type="Proteomes" id="UP000001134">
    <property type="component" value="Genome"/>
</dbReference>
<organism>
    <name type="scientific">Acanthamoeba polyphaga mimivirus</name>
    <name type="common">APMV</name>
    <dbReference type="NCBI Taxonomy" id="212035"/>
    <lineage>
        <taxon>Viruses</taxon>
        <taxon>Varidnaviria</taxon>
        <taxon>Bamfordvirae</taxon>
        <taxon>Nucleocytoviricota</taxon>
        <taxon>Megaviricetes</taxon>
        <taxon>Imitervirales</taxon>
        <taxon>Mimiviridae</taxon>
        <taxon>Megamimivirinae</taxon>
        <taxon>Mimivirus</taxon>
        <taxon>Mimivirus bradfordmassiliense</taxon>
    </lineage>
</organism>
<sequence>MDSWNCTYCGLEDCDHLNSVVVPKQTNTYWPEPESHKLLQENDLFVISGIDCSFRIDKNVVPKNSILFSKMTSQCFTGTNRFDLPLSQGAMKFIYWFFFDEISKNEIVYKSEFCWIDPISENNQNKVHYINEKDLEYICFAETIKHIYSDMLISDDSDLLTVPKVHGFLCPTRAFVRVLSEYLCFPHRLEKFAMISLEQDRNETRKIHQRIMRTY</sequence>
<gene>
    <name type="ordered locus">MIMI_R752</name>
</gene>
<proteinExistence type="predicted"/>
<feature type="chain" id="PRO_0000071346" description="Uncharacterized protein R752">
    <location>
        <begin position="1"/>
        <end position="215"/>
    </location>
</feature>
<accession>Q5UP00</accession>
<reference key="1">
    <citation type="journal article" date="2004" name="Science">
        <title>The 1.2-megabase genome sequence of Mimivirus.</title>
        <authorList>
            <person name="Raoult D."/>
            <person name="Audic S."/>
            <person name="Robert C."/>
            <person name="Abergel C."/>
            <person name="Renesto P."/>
            <person name="Ogata H."/>
            <person name="La Scola B."/>
            <person name="Susan M."/>
            <person name="Claverie J.-M."/>
        </authorList>
    </citation>
    <scope>NUCLEOTIDE SEQUENCE [LARGE SCALE GENOMIC DNA]</scope>
    <source>
        <strain>Rowbotham-Bradford</strain>
    </source>
</reference>
<keyword id="KW-1185">Reference proteome</keyword>
<protein>
    <recommendedName>
        <fullName>Uncharacterized protein R752</fullName>
    </recommendedName>
</protein>
<organismHost>
    <name type="scientific">Acanthamoeba polyphaga</name>
    <name type="common">Amoeba</name>
    <dbReference type="NCBI Taxonomy" id="5757"/>
</organismHost>